<reference key="1">
    <citation type="submission" date="2006-03" db="EMBL/GenBank/DDBJ databases">
        <title>Complete sequence of Methylobacillus flagellatus KT.</title>
        <authorList>
            <consortium name="US DOE Joint Genome Institute"/>
            <person name="Copeland A."/>
            <person name="Lucas S."/>
            <person name="Lapidus A."/>
            <person name="Barry K."/>
            <person name="Detter J.C."/>
            <person name="Glavina del Rio T."/>
            <person name="Hammon N."/>
            <person name="Israni S."/>
            <person name="Dalin E."/>
            <person name="Tice H."/>
            <person name="Pitluck S."/>
            <person name="Brettin T."/>
            <person name="Bruce D."/>
            <person name="Han C."/>
            <person name="Tapia R."/>
            <person name="Saunders E."/>
            <person name="Gilna P."/>
            <person name="Schmutz J."/>
            <person name="Larimer F."/>
            <person name="Land M."/>
            <person name="Kyrpides N."/>
            <person name="Anderson I."/>
            <person name="Richardson P."/>
        </authorList>
    </citation>
    <scope>NUCLEOTIDE SEQUENCE [LARGE SCALE GENOMIC DNA]</scope>
    <source>
        <strain>ATCC 51484 / DSM 6875 / VKM B-1610 / KT</strain>
    </source>
</reference>
<sequence length="102" mass="11177">MIPGEMKIDAGEILLNDGRETVTLEVANTGDRPIQVGSHYHFYETNEALSFERQLAYGFRLDIAAGTAVRFEPGQSRTVQLVALSGKREVYGFAGKVMGALK</sequence>
<comment type="catalytic activity">
    <reaction evidence="1">
        <text>urea + 2 H2O + H(+) = hydrogencarbonate + 2 NH4(+)</text>
        <dbReference type="Rhea" id="RHEA:20557"/>
        <dbReference type="ChEBI" id="CHEBI:15377"/>
        <dbReference type="ChEBI" id="CHEBI:15378"/>
        <dbReference type="ChEBI" id="CHEBI:16199"/>
        <dbReference type="ChEBI" id="CHEBI:17544"/>
        <dbReference type="ChEBI" id="CHEBI:28938"/>
        <dbReference type="EC" id="3.5.1.5"/>
    </reaction>
</comment>
<comment type="pathway">
    <text evidence="1">Nitrogen metabolism; urea degradation; CO(2) and NH(3) from urea (urease route): step 1/1.</text>
</comment>
<comment type="subunit">
    <text evidence="1">Heterotrimer of UreA (gamma), UreB (beta) and UreC (alpha) subunits. Three heterotrimers associate to form the active enzyme.</text>
</comment>
<comment type="subcellular location">
    <subcellularLocation>
        <location evidence="1">Cytoplasm</location>
    </subcellularLocation>
</comment>
<comment type="similarity">
    <text evidence="1">Belongs to the urease beta subunit family.</text>
</comment>
<name>URE2_METFK</name>
<accession>Q1H0F1</accession>
<protein>
    <recommendedName>
        <fullName evidence="1">Urease subunit beta</fullName>
        <ecNumber evidence="1">3.5.1.5</ecNumber>
    </recommendedName>
    <alternativeName>
        <fullName evidence="1">Urea amidohydrolase subunit beta</fullName>
    </alternativeName>
</protein>
<gene>
    <name evidence="1" type="primary">ureB</name>
    <name type="ordered locus">Mfla_1768</name>
</gene>
<dbReference type="EC" id="3.5.1.5" evidence="1"/>
<dbReference type="EMBL" id="CP000284">
    <property type="protein sequence ID" value="ABE50036.1"/>
    <property type="molecule type" value="Genomic_DNA"/>
</dbReference>
<dbReference type="RefSeq" id="WP_011479990.1">
    <property type="nucleotide sequence ID" value="NC_007947.1"/>
</dbReference>
<dbReference type="SMR" id="Q1H0F1"/>
<dbReference type="STRING" id="265072.Mfla_1768"/>
<dbReference type="KEGG" id="mfa:Mfla_1768"/>
<dbReference type="eggNOG" id="COG0832">
    <property type="taxonomic scope" value="Bacteria"/>
</dbReference>
<dbReference type="HOGENOM" id="CLU_129707_1_1_4"/>
<dbReference type="OrthoDB" id="9797217at2"/>
<dbReference type="UniPathway" id="UPA00258">
    <property type="reaction ID" value="UER00370"/>
</dbReference>
<dbReference type="Proteomes" id="UP000002440">
    <property type="component" value="Chromosome"/>
</dbReference>
<dbReference type="GO" id="GO:0035550">
    <property type="term" value="C:urease complex"/>
    <property type="evidence" value="ECO:0007669"/>
    <property type="project" value="InterPro"/>
</dbReference>
<dbReference type="GO" id="GO:0009039">
    <property type="term" value="F:urease activity"/>
    <property type="evidence" value="ECO:0007669"/>
    <property type="project" value="UniProtKB-UniRule"/>
</dbReference>
<dbReference type="GO" id="GO:0043419">
    <property type="term" value="P:urea catabolic process"/>
    <property type="evidence" value="ECO:0007669"/>
    <property type="project" value="UniProtKB-UniRule"/>
</dbReference>
<dbReference type="CDD" id="cd00407">
    <property type="entry name" value="Urease_beta"/>
    <property type="match status" value="1"/>
</dbReference>
<dbReference type="FunFam" id="2.10.150.10:FF:000001">
    <property type="entry name" value="Urease subunit beta"/>
    <property type="match status" value="1"/>
</dbReference>
<dbReference type="Gene3D" id="2.10.150.10">
    <property type="entry name" value="Urease, beta subunit"/>
    <property type="match status" value="1"/>
</dbReference>
<dbReference type="HAMAP" id="MF_01954">
    <property type="entry name" value="Urease_beta"/>
    <property type="match status" value="1"/>
</dbReference>
<dbReference type="InterPro" id="IPR002019">
    <property type="entry name" value="Urease_beta-like"/>
</dbReference>
<dbReference type="InterPro" id="IPR036461">
    <property type="entry name" value="Urease_betasu_sf"/>
</dbReference>
<dbReference type="InterPro" id="IPR050069">
    <property type="entry name" value="Urease_subunit"/>
</dbReference>
<dbReference type="NCBIfam" id="NF009682">
    <property type="entry name" value="PRK13203.1"/>
    <property type="match status" value="1"/>
</dbReference>
<dbReference type="NCBIfam" id="TIGR00192">
    <property type="entry name" value="urease_beta"/>
    <property type="match status" value="1"/>
</dbReference>
<dbReference type="PANTHER" id="PTHR33569">
    <property type="entry name" value="UREASE"/>
    <property type="match status" value="1"/>
</dbReference>
<dbReference type="PANTHER" id="PTHR33569:SF1">
    <property type="entry name" value="UREASE"/>
    <property type="match status" value="1"/>
</dbReference>
<dbReference type="Pfam" id="PF00699">
    <property type="entry name" value="Urease_beta"/>
    <property type="match status" value="1"/>
</dbReference>
<dbReference type="SUPFAM" id="SSF51278">
    <property type="entry name" value="Urease, beta-subunit"/>
    <property type="match status" value="1"/>
</dbReference>
<evidence type="ECO:0000255" key="1">
    <source>
        <dbReference type="HAMAP-Rule" id="MF_01954"/>
    </source>
</evidence>
<feature type="chain" id="PRO_1000070742" description="Urease subunit beta">
    <location>
        <begin position="1"/>
        <end position="102"/>
    </location>
</feature>
<keyword id="KW-0963">Cytoplasm</keyword>
<keyword id="KW-0378">Hydrolase</keyword>
<keyword id="KW-1185">Reference proteome</keyword>
<organism>
    <name type="scientific">Methylobacillus flagellatus (strain ATCC 51484 / DSM 6875 / VKM B-1610 / KT)</name>
    <dbReference type="NCBI Taxonomy" id="265072"/>
    <lineage>
        <taxon>Bacteria</taxon>
        <taxon>Pseudomonadati</taxon>
        <taxon>Pseudomonadota</taxon>
        <taxon>Betaproteobacteria</taxon>
        <taxon>Nitrosomonadales</taxon>
        <taxon>Methylophilaceae</taxon>
        <taxon>Methylobacillus</taxon>
    </lineage>
</organism>
<proteinExistence type="inferred from homology"/>